<sequence length="251" mass="28198">MVDQEKETTHFGFRTVAKEQKEGMVAEVFHSVAAKYDLMNDLMSFGVHRIWKRFTVDCSGVRRGQRVLDLAGGTGDLTAKFSRLVGEQGEVILADINESMLRMGREKLRDKGIVGNVSYVQANAEALPFPDNYFDCITISFGLRNVTEKEKALRSMFRVLKPGGRLLVLEFSKPLLEPLSKAYDAYSFHILPKIGELVAQDAESYRYLAESIRMHPDQETLKGMMADAGFENVTYSNLTGGIVALHRGFKF</sequence>
<accession>A4TR39</accession>
<reference key="1">
    <citation type="submission" date="2007-02" db="EMBL/GenBank/DDBJ databases">
        <title>Complete sequence of chromosome of Yersinia pestis Pestoides F.</title>
        <authorList>
            <consortium name="US DOE Joint Genome Institute"/>
            <person name="Copeland A."/>
            <person name="Lucas S."/>
            <person name="Lapidus A."/>
            <person name="Barry K."/>
            <person name="Detter J.C."/>
            <person name="Glavina del Rio T."/>
            <person name="Hammon N."/>
            <person name="Israni S."/>
            <person name="Dalin E."/>
            <person name="Tice H."/>
            <person name="Pitluck S."/>
            <person name="Di Bartolo G."/>
            <person name="Chain P."/>
            <person name="Malfatti S."/>
            <person name="Shin M."/>
            <person name="Vergez L."/>
            <person name="Schmutz J."/>
            <person name="Larimer F."/>
            <person name="Land M."/>
            <person name="Hauser L."/>
            <person name="Worsham P."/>
            <person name="Chu M."/>
            <person name="Bearden S."/>
            <person name="Garcia E."/>
            <person name="Richardson P."/>
        </authorList>
    </citation>
    <scope>NUCLEOTIDE SEQUENCE [LARGE SCALE GENOMIC DNA]</scope>
    <source>
        <strain>Pestoides F</strain>
    </source>
</reference>
<proteinExistence type="inferred from homology"/>
<keyword id="KW-0474">Menaquinone biosynthesis</keyword>
<keyword id="KW-0489">Methyltransferase</keyword>
<keyword id="KW-0949">S-adenosyl-L-methionine</keyword>
<keyword id="KW-0808">Transferase</keyword>
<keyword id="KW-0831">Ubiquinone biosynthesis</keyword>
<comment type="function">
    <text evidence="1">Methyltransferase required for the conversion of demethylmenaquinol (DMKH2) to menaquinol (MKH2) and the conversion of 2-polyprenyl-6-methoxy-1,4-benzoquinol (DDMQH2) to 2-polyprenyl-3-methyl-6-methoxy-1,4-benzoquinol (DMQH2).</text>
</comment>
<comment type="catalytic activity">
    <reaction evidence="1">
        <text>a 2-demethylmenaquinol + S-adenosyl-L-methionine = a menaquinol + S-adenosyl-L-homocysteine + H(+)</text>
        <dbReference type="Rhea" id="RHEA:42640"/>
        <dbReference type="Rhea" id="RHEA-COMP:9539"/>
        <dbReference type="Rhea" id="RHEA-COMP:9563"/>
        <dbReference type="ChEBI" id="CHEBI:15378"/>
        <dbReference type="ChEBI" id="CHEBI:18151"/>
        <dbReference type="ChEBI" id="CHEBI:55437"/>
        <dbReference type="ChEBI" id="CHEBI:57856"/>
        <dbReference type="ChEBI" id="CHEBI:59789"/>
        <dbReference type="EC" id="2.1.1.163"/>
    </reaction>
</comment>
<comment type="catalytic activity">
    <reaction evidence="1">
        <text>a 2-methoxy-6-(all-trans-polyprenyl)benzene-1,4-diol + S-adenosyl-L-methionine = a 5-methoxy-2-methyl-3-(all-trans-polyprenyl)benzene-1,4-diol + S-adenosyl-L-homocysteine + H(+)</text>
        <dbReference type="Rhea" id="RHEA:28286"/>
        <dbReference type="Rhea" id="RHEA-COMP:10858"/>
        <dbReference type="Rhea" id="RHEA-COMP:10859"/>
        <dbReference type="ChEBI" id="CHEBI:15378"/>
        <dbReference type="ChEBI" id="CHEBI:57856"/>
        <dbReference type="ChEBI" id="CHEBI:59789"/>
        <dbReference type="ChEBI" id="CHEBI:84166"/>
        <dbReference type="ChEBI" id="CHEBI:84167"/>
        <dbReference type="EC" id="2.1.1.201"/>
    </reaction>
</comment>
<comment type="pathway">
    <text evidence="1">Quinol/quinone metabolism; menaquinone biosynthesis; menaquinol from 1,4-dihydroxy-2-naphthoate: step 2/2.</text>
</comment>
<comment type="pathway">
    <text evidence="1">Cofactor biosynthesis; ubiquinone biosynthesis.</text>
</comment>
<comment type="similarity">
    <text evidence="1">Belongs to the class I-like SAM-binding methyltransferase superfamily. MenG/UbiE family.</text>
</comment>
<dbReference type="EC" id="2.1.1.163" evidence="1"/>
<dbReference type="EC" id="2.1.1.201" evidence="1"/>
<dbReference type="EMBL" id="CP000668">
    <property type="protein sequence ID" value="ABP41751.1"/>
    <property type="molecule type" value="Genomic_DNA"/>
</dbReference>
<dbReference type="RefSeq" id="WP_002224024.1">
    <property type="nucleotide sequence ID" value="NZ_CP009715.1"/>
</dbReference>
<dbReference type="SMR" id="A4TR39"/>
<dbReference type="GeneID" id="49787763"/>
<dbReference type="KEGG" id="ypp:YPDSF_3398"/>
<dbReference type="PATRIC" id="fig|386656.14.peg.930"/>
<dbReference type="UniPathway" id="UPA00079">
    <property type="reaction ID" value="UER00169"/>
</dbReference>
<dbReference type="UniPathway" id="UPA00232"/>
<dbReference type="GO" id="GO:0008425">
    <property type="term" value="F:2-methoxy-6-polyprenyl-1,4-benzoquinol methyltransferase activity"/>
    <property type="evidence" value="ECO:0007669"/>
    <property type="project" value="UniProtKB-UniRule"/>
</dbReference>
<dbReference type="GO" id="GO:0043770">
    <property type="term" value="F:demethylmenaquinone methyltransferase activity"/>
    <property type="evidence" value="ECO:0007669"/>
    <property type="project" value="UniProtKB-UniRule"/>
</dbReference>
<dbReference type="GO" id="GO:0009060">
    <property type="term" value="P:aerobic respiration"/>
    <property type="evidence" value="ECO:0007669"/>
    <property type="project" value="UniProtKB-UniRule"/>
</dbReference>
<dbReference type="GO" id="GO:0009234">
    <property type="term" value="P:menaquinone biosynthetic process"/>
    <property type="evidence" value="ECO:0007669"/>
    <property type="project" value="UniProtKB-UniRule"/>
</dbReference>
<dbReference type="GO" id="GO:0032259">
    <property type="term" value="P:methylation"/>
    <property type="evidence" value="ECO:0007669"/>
    <property type="project" value="UniProtKB-KW"/>
</dbReference>
<dbReference type="CDD" id="cd02440">
    <property type="entry name" value="AdoMet_MTases"/>
    <property type="match status" value="1"/>
</dbReference>
<dbReference type="FunFam" id="3.40.50.150:FF:000014">
    <property type="entry name" value="Ubiquinone/menaquinone biosynthesis C-methyltransferase UbiE"/>
    <property type="match status" value="1"/>
</dbReference>
<dbReference type="Gene3D" id="3.40.50.150">
    <property type="entry name" value="Vaccinia Virus protein VP39"/>
    <property type="match status" value="1"/>
</dbReference>
<dbReference type="HAMAP" id="MF_01813">
    <property type="entry name" value="MenG_UbiE_methyltr"/>
    <property type="match status" value="1"/>
</dbReference>
<dbReference type="InterPro" id="IPR029063">
    <property type="entry name" value="SAM-dependent_MTases_sf"/>
</dbReference>
<dbReference type="InterPro" id="IPR004033">
    <property type="entry name" value="UbiE/COQ5_MeTrFase"/>
</dbReference>
<dbReference type="InterPro" id="IPR023576">
    <property type="entry name" value="UbiE/COQ5_MeTrFase_CS"/>
</dbReference>
<dbReference type="NCBIfam" id="TIGR01934">
    <property type="entry name" value="MenG_MenH_UbiE"/>
    <property type="match status" value="1"/>
</dbReference>
<dbReference type="NCBIfam" id="NF001240">
    <property type="entry name" value="PRK00216.1-1"/>
    <property type="match status" value="1"/>
</dbReference>
<dbReference type="NCBIfam" id="NF001242">
    <property type="entry name" value="PRK00216.1-3"/>
    <property type="match status" value="1"/>
</dbReference>
<dbReference type="NCBIfam" id="NF001244">
    <property type="entry name" value="PRK00216.1-5"/>
    <property type="match status" value="1"/>
</dbReference>
<dbReference type="PANTHER" id="PTHR43591:SF24">
    <property type="entry name" value="2-METHOXY-6-POLYPRENYL-1,4-BENZOQUINOL METHYLASE, MITOCHONDRIAL"/>
    <property type="match status" value="1"/>
</dbReference>
<dbReference type="PANTHER" id="PTHR43591">
    <property type="entry name" value="METHYLTRANSFERASE"/>
    <property type="match status" value="1"/>
</dbReference>
<dbReference type="Pfam" id="PF01209">
    <property type="entry name" value="Ubie_methyltran"/>
    <property type="match status" value="1"/>
</dbReference>
<dbReference type="SUPFAM" id="SSF53335">
    <property type="entry name" value="S-adenosyl-L-methionine-dependent methyltransferases"/>
    <property type="match status" value="1"/>
</dbReference>
<dbReference type="PROSITE" id="PS51608">
    <property type="entry name" value="SAM_MT_UBIE"/>
    <property type="match status" value="1"/>
</dbReference>
<dbReference type="PROSITE" id="PS01183">
    <property type="entry name" value="UBIE_1"/>
    <property type="match status" value="1"/>
</dbReference>
<dbReference type="PROSITE" id="PS01184">
    <property type="entry name" value="UBIE_2"/>
    <property type="match status" value="1"/>
</dbReference>
<feature type="chain" id="PRO_1000056319" description="Ubiquinone/menaquinone biosynthesis C-methyltransferase UbiE">
    <location>
        <begin position="1"/>
        <end position="251"/>
    </location>
</feature>
<feature type="binding site" evidence="1">
    <location>
        <position position="74"/>
    </location>
    <ligand>
        <name>S-adenosyl-L-methionine</name>
        <dbReference type="ChEBI" id="CHEBI:59789"/>
    </ligand>
</feature>
<feature type="binding site" evidence="1">
    <location>
        <position position="95"/>
    </location>
    <ligand>
        <name>S-adenosyl-L-methionine</name>
        <dbReference type="ChEBI" id="CHEBI:59789"/>
    </ligand>
</feature>
<feature type="binding site" evidence="1">
    <location>
        <begin position="123"/>
        <end position="124"/>
    </location>
    <ligand>
        <name>S-adenosyl-L-methionine</name>
        <dbReference type="ChEBI" id="CHEBI:59789"/>
    </ligand>
</feature>
<feature type="binding site" evidence="1">
    <location>
        <position position="140"/>
    </location>
    <ligand>
        <name>S-adenosyl-L-methionine</name>
        <dbReference type="ChEBI" id="CHEBI:59789"/>
    </ligand>
</feature>
<gene>
    <name evidence="1" type="primary">ubiE</name>
    <name type="ordered locus">YPDSF_3398</name>
</gene>
<organism>
    <name type="scientific">Yersinia pestis (strain Pestoides F)</name>
    <dbReference type="NCBI Taxonomy" id="386656"/>
    <lineage>
        <taxon>Bacteria</taxon>
        <taxon>Pseudomonadati</taxon>
        <taxon>Pseudomonadota</taxon>
        <taxon>Gammaproteobacteria</taxon>
        <taxon>Enterobacterales</taxon>
        <taxon>Yersiniaceae</taxon>
        <taxon>Yersinia</taxon>
    </lineage>
</organism>
<name>UBIE_YERPP</name>
<evidence type="ECO:0000255" key="1">
    <source>
        <dbReference type="HAMAP-Rule" id="MF_01813"/>
    </source>
</evidence>
<protein>
    <recommendedName>
        <fullName evidence="1">Ubiquinone/menaquinone biosynthesis C-methyltransferase UbiE</fullName>
        <ecNumber evidence="1">2.1.1.163</ecNumber>
        <ecNumber evidence="1">2.1.1.201</ecNumber>
    </recommendedName>
    <alternativeName>
        <fullName evidence="1">2-methoxy-6-polyprenyl-1,4-benzoquinol methylase</fullName>
    </alternativeName>
    <alternativeName>
        <fullName evidence="1">Demethylmenaquinone methyltransferase</fullName>
    </alternativeName>
</protein>